<comment type="function">
    <text evidence="1">Plays a role in embryonic morphogenesis; it is involved in the regulation of endochondral skeleton formation, and the development of retinal pigment epithelium (RPE), photoreceptors and periocular tissues (By similarity).</text>
</comment>
<comment type="function">
    <molecule>Indian hedgehog protein</molecule>
    <text evidence="4 10 12">The C-terminal part of the indian hedgehog protein precursor displays an autoproteolysis and a cholesterol transferase activity (By similarity). Both activities result in the cleavage of the full-length protein into two parts followed by the covalent attachment of a cholesterol moiety to the C-terminal of the newly generated N-product (By similarity). Both activities occur in the endoplasmic reticulum (By similarity). Plays a role in hedgehog paracrine signaling (PubMed:24342078). Associated with the very-low-density lipoprotein (VLDL) particles to function as a circulating morphogen for endothelial cell integrity maintenance (PubMed:20839884).</text>
</comment>
<comment type="function">
    <molecule>Indian hedgehog protein N-product</molecule>
    <text evidence="1 3 4">The dually lipidated indian hedgehog protein N-product is a morphogen which is essential for a variety of patterning events during development. Binds to the patched (PTCH1) receptor, which functions in association with smoothened (SMO), to activate the transcription of target genes (By similarity). Plays a role in morphogenesis of the skeleton by coordinating growth and differentiation of the endochondral skeleton (By similarity). Positively regulates PTHLH expression during endochondral bone formation preventing chondrocyte hypertrophy. In contrast, participates in normal chondrocyte proliferation in a PTHLH-independent pathway (By similarity).</text>
</comment>
<comment type="catalytic activity">
    <molecule>Indian hedgehog protein</molecule>
    <reaction evidence="4">
        <text>glycyl-L-cysteinyl-[protein] + cholesterol + H(+) = [protein]-C-terminal glycyl cholesterol ester + N-terminal L-cysteinyl-[protein]</text>
        <dbReference type="Rhea" id="RHEA:59504"/>
        <dbReference type="Rhea" id="RHEA-COMP:12707"/>
        <dbReference type="Rhea" id="RHEA-COMP:15369"/>
        <dbReference type="Rhea" id="RHEA-COMP:15374"/>
        <dbReference type="ChEBI" id="CHEBI:15378"/>
        <dbReference type="ChEBI" id="CHEBI:16113"/>
        <dbReference type="ChEBI" id="CHEBI:65250"/>
        <dbReference type="ChEBI" id="CHEBI:143135"/>
        <dbReference type="ChEBI" id="CHEBI:143140"/>
    </reaction>
    <physiologicalReaction direction="left-to-right" evidence="4">
        <dbReference type="Rhea" id="RHEA:59505"/>
    </physiologicalReaction>
</comment>
<comment type="subunit">
    <molecule>Indian hedgehog protein N-product</molecule>
    <text evidence="11">Multimer.</text>
</comment>
<comment type="subunit">
    <text evidence="1 9 11">Interacts with BOC and CDON (PubMed:20519495). Interacts with PTCH1 (PubMed:21537345). Interacts with glypican GPC3 (By similarity).</text>
</comment>
<comment type="interaction">
    <interactant intactId="EBI-3918622">
        <id>Q14623</id>
    </interactant>
    <interactant intactId="EBI-718555">
        <id>Q9BWV1</id>
        <label>BOC</label>
    </interactant>
    <organismsDiffer>false</organismsDiffer>
    <experiments>2</experiments>
</comment>
<comment type="subcellular location">
    <molecule>Indian hedgehog protein N-product</molecule>
    <subcellularLocation>
        <location evidence="11">Cell membrane</location>
        <topology evidence="4">Lipid-anchor</topology>
    </subcellularLocation>
    <text evidence="3">The N-product remains associated with the cell surface.</text>
</comment>
<comment type="subcellular location">
    <molecule>Indian hedgehog protein</molecule>
    <subcellularLocation>
        <location evidence="3">Endoplasmic reticulum membrane</location>
    </subcellularLocation>
    <subcellularLocation>
        <location evidence="3">Golgi apparatus membrane</location>
    </subcellularLocation>
    <subcellularLocation>
        <location evidence="12">Secreted</location>
    </subcellularLocation>
    <text evidence="3">Co-localizes with HHAT in the ER and Golgi membrane.</text>
</comment>
<comment type="tissue specificity">
    <text>Expressed in embryonic lung, and in adult kidney and liver.</text>
</comment>
<comment type="domain">
    <molecule>Indian hedgehog protein N-product</molecule>
    <text evidence="9 11">Binds calcium and zinc ions; this stabilizes the protein fold and is essential for protein-protein interactions mediated by this domain.</text>
</comment>
<comment type="PTM">
    <molecule>Indian hedgehog protein N-product</molecule>
    <text evidence="11">Cholesterylation is required for N-product targeting to lipid rafts and multimerization.</text>
</comment>
<comment type="PTM">
    <molecule>Indian hedgehog protein</molecule>
    <text evidence="3 4">The C-terminal domain displays an autoproteolysis activity and a cholesterol transferase activity (By similarity). Both activities result in the cleavage of the full-length protein and covalent attachment of a cholesterol moiety to the C-terminal of the newly generated N-product (By similarity). The N-product is the active species in both local and long-range signaling, whereas the C-product is degraded in the endoplasmic reticulum (By similarity).</text>
</comment>
<comment type="PTM">
    <molecule>Indian hedgehog protein N-product</molecule>
    <text evidence="11 13">N-palmitoylation by HHAT of N-product is required for indian hedgehog protein N-product multimerization and full activity.</text>
</comment>
<comment type="disease" evidence="5 6 11">
    <disease id="DI-00194">
        <name>Brachydactyly A1</name>
        <acronym>BDA1</acronym>
        <description>An autosomal dominant form of brachydactyly, a group of inherited malformations characterized by shortening of the digits due to abnormal development of the phalanges and/or the metacarpals. Brachydactyly type A1 is characterized by middle phalanges of all the digits rudimentary or fused with the terminal phalanges. The proximal phalanges of the thumbs and big toes are short. Some BDA1 affected individuals exhibit short stature.</description>
        <dbReference type="MIM" id="112500"/>
    </disease>
    <text>The disease is caused by variants affecting the gene represented in this entry.</text>
</comment>
<comment type="disease" evidence="7">
    <disease id="DI-00026">
        <name>Acrocapitofemoral dysplasia</name>
        <acronym>ACFD</acronym>
        <description>An autosomal recessive disorder characterized by short stature of variable severity with postnatal onset. The most constant radiographic abnormalities are observed in the tubular bones of the hands and in the proximal part of the femur. Cone-shaped epiphyses or a similar epiphyseal configuration with premature epimetaphyseal fusion result in shortening of the skeletal components involved. Cone-shaped epiphyses are also present to a variable extent at the shoulders, knees and ankles.</description>
        <dbReference type="MIM" id="607778"/>
    </disease>
    <text>The disease is caused by variants affecting the gene represented in this entry.</text>
</comment>
<comment type="similarity">
    <text evidence="14">Belongs to the hedgehog family.</text>
</comment>
<evidence type="ECO:0000250" key="1">
    <source>
        <dbReference type="UniProtKB" id="P97812"/>
    </source>
</evidence>
<evidence type="ECO:0000250" key="2">
    <source>
        <dbReference type="UniProtKB" id="Q02936"/>
    </source>
</evidence>
<evidence type="ECO:0000250" key="3">
    <source>
        <dbReference type="UniProtKB" id="Q15465"/>
    </source>
</evidence>
<evidence type="ECO:0000250" key="4">
    <source>
        <dbReference type="UniProtKB" id="Q62226"/>
    </source>
</evidence>
<evidence type="ECO:0000269" key="5">
    <source>
    </source>
</evidence>
<evidence type="ECO:0000269" key="6">
    <source>
    </source>
</evidence>
<evidence type="ECO:0000269" key="7">
    <source>
    </source>
</evidence>
<evidence type="ECO:0000269" key="8">
    <source>
    </source>
</evidence>
<evidence type="ECO:0000269" key="9">
    <source>
    </source>
</evidence>
<evidence type="ECO:0000269" key="10">
    <source>
    </source>
</evidence>
<evidence type="ECO:0000269" key="11">
    <source>
    </source>
</evidence>
<evidence type="ECO:0000269" key="12">
    <source>
    </source>
</evidence>
<evidence type="ECO:0000269" key="13">
    <source>
    </source>
</evidence>
<evidence type="ECO:0000305" key="14"/>
<evidence type="ECO:0000305" key="15">
    <source>
    </source>
</evidence>
<evidence type="ECO:0000312" key="16">
    <source>
        <dbReference type="HGNC" id="HGNC:5956"/>
    </source>
</evidence>
<evidence type="ECO:0007829" key="17">
    <source>
        <dbReference type="PDB" id="3K7I"/>
    </source>
</evidence>
<evidence type="ECO:0007829" key="18">
    <source>
        <dbReference type="PDB" id="3N1P"/>
    </source>
</evidence>
<proteinExistence type="evidence at protein level"/>
<feature type="signal peptide" evidence="14">
    <location>
        <begin position="1"/>
        <end position="27"/>
    </location>
</feature>
<feature type="chain" id="PRO_0000013229" description="Indian hedgehog protein">
    <location>
        <begin position="28"/>
        <end position="411"/>
    </location>
</feature>
<feature type="chain" id="PRO_0000013230" description="Indian hedgehog protein N-product">
    <location>
        <begin position="28"/>
        <end position="202"/>
    </location>
</feature>
<feature type="binding site" evidence="9">
    <location>
        <position position="94"/>
    </location>
    <ligand>
        <name>Ca(2+)</name>
        <dbReference type="ChEBI" id="CHEBI:29108"/>
        <label>1</label>
    </ligand>
</feature>
<feature type="binding site" evidence="9">
    <location>
        <position position="95"/>
    </location>
    <ligand>
        <name>Ca(2+)</name>
        <dbReference type="ChEBI" id="CHEBI:29108"/>
        <label>1</label>
    </ligand>
</feature>
<feature type="binding site" evidence="9">
    <location>
        <position position="95"/>
    </location>
    <ligand>
        <name>Ca(2+)</name>
        <dbReference type="ChEBI" id="CHEBI:29108"/>
        <label>2</label>
    </ligand>
</feature>
<feature type="binding site" evidence="9">
    <location>
        <position position="100"/>
    </location>
    <ligand>
        <name>Ca(2+)</name>
        <dbReference type="ChEBI" id="CHEBI:29108"/>
        <label>1</label>
    </ligand>
</feature>
<feature type="binding site" evidence="9">
    <location>
        <position position="130"/>
    </location>
    <ligand>
        <name>Ca(2+)</name>
        <dbReference type="ChEBI" id="CHEBI:29108"/>
        <label>1</label>
    </ligand>
</feature>
<feature type="binding site" evidence="9">
    <location>
        <position position="131"/>
    </location>
    <ligand>
        <name>Ca(2+)</name>
        <dbReference type="ChEBI" id="CHEBI:29108"/>
        <label>1</label>
    </ligand>
</feature>
<feature type="binding site" evidence="9">
    <location>
        <position position="131"/>
    </location>
    <ligand>
        <name>Ca(2+)</name>
        <dbReference type="ChEBI" id="CHEBI:29108"/>
        <label>2</label>
    </ligand>
</feature>
<feature type="binding site" evidence="9">
    <location>
        <position position="134"/>
    </location>
    <ligand>
        <name>Ca(2+)</name>
        <dbReference type="ChEBI" id="CHEBI:29108"/>
        <label>2</label>
    </ligand>
</feature>
<feature type="binding site" evidence="9">
    <location>
        <position position="136"/>
    </location>
    <ligand>
        <name>Ca(2+)</name>
        <dbReference type="ChEBI" id="CHEBI:29108"/>
        <label>2</label>
    </ligand>
</feature>
<feature type="binding site" evidence="9 11">
    <location>
        <position position="145"/>
    </location>
    <ligand>
        <name>Zn(2+)</name>
        <dbReference type="ChEBI" id="CHEBI:29105"/>
    </ligand>
</feature>
<feature type="binding site" evidence="9 11">
    <location>
        <position position="152"/>
    </location>
    <ligand>
        <name>Zn(2+)</name>
        <dbReference type="ChEBI" id="CHEBI:29105"/>
    </ligand>
</feature>
<feature type="binding site" evidence="9 11">
    <location>
        <position position="187"/>
    </location>
    <ligand>
        <name>Zn(2+)</name>
        <dbReference type="ChEBI" id="CHEBI:29105"/>
    </ligand>
</feature>
<feature type="site" description="Cleavage; by autolysis" evidence="2">
    <location>
        <begin position="202"/>
        <end position="203"/>
    </location>
</feature>
<feature type="site" description="Involved in cholesterol transfer" evidence="2">
    <location>
        <position position="248"/>
    </location>
</feature>
<feature type="site" description="Involved in auto-cleavage" evidence="2">
    <location>
        <position position="272"/>
    </location>
</feature>
<feature type="site" description="Essential for auto-cleavage" evidence="2">
    <location>
        <position position="275"/>
    </location>
</feature>
<feature type="lipid moiety-binding region" description="N-palmitoyl cysteine" evidence="15">
    <location>
        <position position="28"/>
    </location>
</feature>
<feature type="lipid moiety-binding region" description="Cholesterol glycine ester" evidence="2">
    <location>
        <position position="202"/>
    </location>
</feature>
<feature type="glycosylation site" description="N-linked (GlcNAc...) asparagine" evidence="8">
    <location>
        <position position="282"/>
    </location>
</feature>
<feature type="sequence variant" id="VAR_015981" description="In ACFD; dbSNP:rs121917856." evidence="7">
    <original>P</original>
    <variation>L</variation>
    <location>
        <position position="46"/>
    </location>
</feature>
<feature type="sequence variant" id="VAR_015982" description="In BDA1; decreases the stability of the indian hedgehog protein N-product; dbSNP:rs121917852." evidence="5 11">
    <original>E</original>
    <variation>K</variation>
    <location>
        <position position="95"/>
    </location>
</feature>
<feature type="sequence variant" id="VAR_015983" description="In BDA1; decreases the stability of the indian hedgehog protein N-product; dbSNP:rs121917854." evidence="5 11">
    <original>D</original>
    <variation>E</variation>
    <location>
        <position position="100"/>
    </location>
</feature>
<feature type="sequence variant" id="VAR_015984" description="In BDA1; decreases the stability of the indian hedgehog protein N-product; dbSNP:rs121917855." evidence="6 11">
    <original>D</original>
    <variation>N</variation>
    <location>
        <position position="100"/>
    </location>
</feature>
<feature type="sequence variant" id="VAR_015985" description="In BDA1; no effect on the stability of the indian hedgehog protein N-product; dbSNP:rs121917853." evidence="5 11">
    <original>E</original>
    <variation>K</variation>
    <location>
        <position position="131"/>
    </location>
</feature>
<feature type="sequence variant" id="VAR_015986" description="In ACFD; dbSNP:rs121917857." evidence="7">
    <original>V</original>
    <variation>A</variation>
    <location>
        <position position="190"/>
    </location>
</feature>
<feature type="mutagenesis site" description="Increases the lysosomal degradation of the indian hedgehog protein N-product." evidence="11">
    <original>E</original>
    <variation>G</variation>
    <location>
        <position position="95"/>
    </location>
</feature>
<feature type="sequence conflict" description="In Ref. 4; AAA62178." evidence="14" ref="4">
    <original>D</original>
    <variation>R</variation>
    <location>
        <position position="100"/>
    </location>
</feature>
<feature type="sequence conflict" description="In Ref. 1; BAA33523." evidence="14" ref="1">
    <original>F</original>
    <variation>L</variation>
    <location>
        <position position="246"/>
    </location>
</feature>
<feature type="sequence conflict" description="In Ref. 1; BAA33523." evidence="14" ref="1">
    <original>V</original>
    <variation>A</variation>
    <location>
        <position position="309"/>
    </location>
</feature>
<feature type="strand" evidence="17">
    <location>
        <begin position="52"/>
        <end position="56"/>
    </location>
</feature>
<feature type="turn" evidence="17">
    <location>
        <begin position="61"/>
        <end position="64"/>
    </location>
</feature>
<feature type="strand" evidence="18">
    <location>
        <begin position="73"/>
        <end position="75"/>
    </location>
</feature>
<feature type="helix" evidence="17">
    <location>
        <begin position="76"/>
        <end position="80"/>
    </location>
</feature>
<feature type="strand" evidence="17">
    <location>
        <begin position="89"/>
        <end position="91"/>
    </location>
</feature>
<feature type="strand" evidence="17">
    <location>
        <begin position="96"/>
        <end position="98"/>
    </location>
</feature>
<feature type="helix" evidence="17">
    <location>
        <begin position="99"/>
        <end position="101"/>
    </location>
</feature>
<feature type="helix" evidence="17">
    <location>
        <begin position="105"/>
        <end position="121"/>
    </location>
</feature>
<feature type="strand" evidence="17">
    <location>
        <begin position="127"/>
        <end position="131"/>
    </location>
</feature>
<feature type="helix" evidence="17">
    <location>
        <begin position="144"/>
        <end position="147"/>
    </location>
</feature>
<feature type="strand" evidence="17">
    <location>
        <begin position="150"/>
        <end position="155"/>
    </location>
</feature>
<feature type="helix" evidence="17">
    <location>
        <begin position="160"/>
        <end position="162"/>
    </location>
</feature>
<feature type="helix" evidence="17">
    <location>
        <begin position="163"/>
        <end position="172"/>
    </location>
</feature>
<feature type="strand" evidence="17">
    <location>
        <begin position="176"/>
        <end position="182"/>
    </location>
</feature>
<feature type="strand" evidence="17">
    <location>
        <begin position="185"/>
        <end position="189"/>
    </location>
</feature>
<feature type="strand" evidence="17">
    <location>
        <begin position="193"/>
        <end position="195"/>
    </location>
</feature>
<keyword id="KW-0002">3D-structure</keyword>
<keyword id="KW-0068">Autocatalytic cleavage</keyword>
<keyword id="KW-0106">Calcium</keyword>
<keyword id="KW-1003">Cell membrane</keyword>
<keyword id="KW-0217">Developmental protein</keyword>
<keyword id="KW-0225">Disease variant</keyword>
<keyword id="KW-0242">Dwarfism</keyword>
<keyword id="KW-0256">Endoplasmic reticulum</keyword>
<keyword id="KW-0325">Glycoprotein</keyword>
<keyword id="KW-0333">Golgi apparatus</keyword>
<keyword id="KW-0378">Hydrolase</keyword>
<keyword id="KW-0449">Lipoprotein</keyword>
<keyword id="KW-0472">Membrane</keyword>
<keyword id="KW-0479">Metal-binding</keyword>
<keyword id="KW-0564">Palmitate</keyword>
<keyword id="KW-0645">Protease</keyword>
<keyword id="KW-1267">Proteomics identification</keyword>
<keyword id="KW-1185">Reference proteome</keyword>
<keyword id="KW-0964">Secreted</keyword>
<keyword id="KW-0732">Signal</keyword>
<keyword id="KW-0808">Transferase</keyword>
<keyword id="KW-0862">Zinc</keyword>
<sequence>MSPARLRPRLHFCLVLLLLLVVPAAWGCGPGRVVGSRRRPPRKLVPLAYKQFSPNVPEKTLGASGRYEGKIARSSERFKELTPNYNPDIIFKDEENTGADRLMTQRCKDRLNSLAISVMNQWPGVKLRVTEGWDEDGHHSEESLHYEGRAVDITTSDRDRNKYGLLARLAVEAGFDWVYYESKAHVHCSVKSEHSAAAKTGGCFPAGAQVRLESGARVALSAVRPGDRVLAMGEDGSPTFSDVLIFLDREPHRLRAFQVIETQDPPRRLALTPAHLLFTADNHTEPAARFRATFASHVQPGQYVLVAGVPGLQPARVAAVSTHVALGAYAPLTKHGTLVVEDVVASCFAAVADHHLAQLAFWPLRLFHSLAWGSWTPGEGVHWYPQLLYRLGRLLLEEGSFHPLGMSGAGS</sequence>
<reference key="1">
    <citation type="journal article" date="2000" name="J. Biochem. Mol. Biol. Biophys.">
        <title>Expression of Sonic hedgehog and its receptor Patched/Smoothened in human cancer cell lines and embryonic organs.</title>
        <authorList>
            <person name="Tate G."/>
            <person name="Kishimoto K."/>
            <person name="Mitsuya T."/>
        </authorList>
    </citation>
    <scope>NUCLEOTIDE SEQUENCE [GENOMIC DNA]</scope>
</reference>
<reference key="2">
    <citation type="submission" date="2005-07" db="EMBL/GenBank/DDBJ databases">
        <authorList>
            <person name="Mural R.J."/>
            <person name="Istrail S."/>
            <person name="Sutton G.G."/>
            <person name="Florea L."/>
            <person name="Halpern A.L."/>
            <person name="Mobarry C.M."/>
            <person name="Lippert R."/>
            <person name="Walenz B."/>
            <person name="Shatkay H."/>
            <person name="Dew I."/>
            <person name="Miller J.R."/>
            <person name="Flanigan M.J."/>
            <person name="Edwards N.J."/>
            <person name="Bolanos R."/>
            <person name="Fasulo D."/>
            <person name="Halldorsson B.V."/>
            <person name="Hannenhalli S."/>
            <person name="Turner R."/>
            <person name="Yooseph S."/>
            <person name="Lu F."/>
            <person name="Nusskern D.R."/>
            <person name="Shue B.C."/>
            <person name="Zheng X.H."/>
            <person name="Zhong F."/>
            <person name="Delcher A.L."/>
            <person name="Huson D.H."/>
            <person name="Kravitz S.A."/>
            <person name="Mouchard L."/>
            <person name="Reinert K."/>
            <person name="Remington K.A."/>
            <person name="Clark A.G."/>
            <person name="Waterman M.S."/>
            <person name="Eichler E.E."/>
            <person name="Adams M.D."/>
            <person name="Hunkapiller M.W."/>
            <person name="Myers E.W."/>
            <person name="Venter J.C."/>
        </authorList>
    </citation>
    <scope>NUCLEOTIDE SEQUENCE [LARGE SCALE GENOMIC DNA]</scope>
</reference>
<reference key="3">
    <citation type="journal article" date="2004" name="Genome Res.">
        <title>The status, quality, and expansion of the NIH full-length cDNA project: the Mammalian Gene Collection (MGC).</title>
        <authorList>
            <consortium name="The MGC Project Team"/>
        </authorList>
    </citation>
    <scope>NUCLEOTIDE SEQUENCE [LARGE SCALE MRNA]</scope>
    <source>
        <tissue>Testis</tissue>
    </source>
</reference>
<reference key="4">
    <citation type="journal article" date="1995" name="Genomics">
        <title>Cloning, expression, and chromosomal location of SHH and IHH: two human homologues of the Drosophila segment polarity gene hedgehog.</title>
        <authorList>
            <person name="Marigo V."/>
            <person name="Roberts D.J."/>
            <person name="Lee S.M.K."/>
            <person name="Tsukurov O."/>
            <person name="Levi T."/>
            <person name="Gastier J.M."/>
            <person name="Epstein D.J."/>
            <person name="Gilbert D.J."/>
            <person name="Copeland N.G."/>
            <person name="Seidman C.E."/>
            <person name="Jenkins N.A."/>
            <person name="Seidman J.G."/>
            <person name="McMahon A.P."/>
            <person name="Tabin C."/>
        </authorList>
    </citation>
    <scope>NUCLEOTIDE SEQUENCE [GENOMIC DNA] OF 100-411</scope>
    <source>
        <tissue>Fetal lung</tissue>
    </source>
</reference>
<reference key="5">
    <citation type="journal article" date="1994" name="Development">
        <title>Products, genetic linkage and limb patterning activity of a murine hedgehog gene.</title>
        <authorList>
            <person name="Chang D.T."/>
            <person name="Lopez A."/>
            <person name="von Kessler D.P."/>
            <person name="Chiang C."/>
            <person name="Simandl B.K."/>
            <person name="Zhao R."/>
            <person name="Seldin M.F."/>
            <person name="Fallon J.F."/>
            <person name="Beachy P.A."/>
        </authorList>
    </citation>
    <scope>NUCLEOTIDE SEQUENCE OF 124-172</scope>
</reference>
<reference key="6">
    <citation type="journal article" date="1998" name="J. Biol. Chem.">
        <title>Identification of a palmitic acid-modified form of human Sonic hedgehog.</title>
        <authorList>
            <person name="Pepinsky R.B."/>
            <person name="Zeng C."/>
            <person name="Wen D."/>
            <person name="Rayhorn P."/>
            <person name="Baker D.P."/>
            <person name="Williams K.P."/>
            <person name="Bixler S.A."/>
            <person name="Ambrose C.M."/>
            <person name="Garber E.A."/>
            <person name="Miatkowski K."/>
            <person name="Taylor F.R."/>
            <person name="Wang E.A."/>
            <person name="Galdes A."/>
        </authorList>
    </citation>
    <scope>PALMITOYLATION AT CYS-28</scope>
</reference>
<reference key="7">
    <citation type="journal article" date="2005" name="J. Proteome Res.">
        <title>Human plasma N-glycoproteome analysis by immunoaffinity subtraction, hydrazide chemistry, and mass spectrometry.</title>
        <authorList>
            <person name="Liu T."/>
            <person name="Qian W.-J."/>
            <person name="Gritsenko M.A."/>
            <person name="Camp D.G. II"/>
            <person name="Monroe M.E."/>
            <person name="Moore R.J."/>
            <person name="Smith R.D."/>
        </authorList>
    </citation>
    <scope>GLYCOSYLATION [LARGE SCALE ANALYSIS] AT ASN-282</scope>
    <source>
        <tissue>Plasma</tissue>
    </source>
</reference>
<reference key="8">
    <citation type="journal article" date="2010" name="J. Proteome Res.">
        <title>Human plasma very low density lipoprotein carries Indian hedgehog.</title>
        <authorList>
            <person name="Queiroz K.C."/>
            <person name="Tio R.A."/>
            <person name="Zeebregts C.J."/>
            <person name="Bijlsma M.F."/>
            <person name="Zijlstra F."/>
            <person name="Badlou B."/>
            <person name="de Vries M."/>
            <person name="Ferreira C.V."/>
            <person name="Spek C.A."/>
            <person name="Peppelenbosch M.P."/>
            <person name="Rezaee F."/>
        </authorList>
    </citation>
    <scope>IDENTIFICATION BY MASS SPECTROMETRY</scope>
    <scope>FUNCTION</scope>
</reference>
<reference key="9">
    <citation type="journal article" date="2014" name="Mech. Dev.">
        <title>A new role for Hedgehogs in juxtacrine signaling.</title>
        <authorList>
            <person name="Pettigrew C.A."/>
            <person name="Asp E."/>
            <person name="Emerson C.P. Jr."/>
        </authorList>
    </citation>
    <scope>SUBCELLULAR LOCATION</scope>
    <scope>FUNCTION</scope>
</reference>
<reference key="10">
    <citation type="journal article" date="2010" name="J. Biol. Chem.">
        <title>All mammalian Hedgehog proteins interact with cell adhesion molecule, down-regulated by oncogenes (CDO) and brother of CDO (BOC) in a conserved manner.</title>
        <authorList>
            <person name="Kavran J.M."/>
            <person name="Ward M.D."/>
            <person name="Oladosu O.O."/>
            <person name="Mulepati S."/>
            <person name="Leahy D.J."/>
        </authorList>
    </citation>
    <scope>X-RAY CRYSTALLOGRAPHY (1.6 ANGSTROMS) OF 29-193 IN COMPLEXES WITH CALCIUM IONS; ZINC IONS; BOC AND CDON</scope>
    <scope>DOMAIN</scope>
    <scope>INTERACTION WITH BOC AND CDON</scope>
</reference>
<reference key="11">
    <citation type="journal article" date="2011" name="Cell Res.">
        <title>Indian hedgehog mutations causing brachydactyly type A1 impair Hedgehog signal transduction at multiple levels.</title>
        <authorList>
            <person name="Ma G."/>
            <person name="Yu J."/>
            <person name="Xiao Y."/>
            <person name="Chan D."/>
            <person name="Gao B."/>
            <person name="Hu J."/>
            <person name="He Y."/>
            <person name="Guo S."/>
            <person name="Zhou J."/>
            <person name="Zhang L."/>
            <person name="Gao L."/>
            <person name="Zhang W."/>
            <person name="Kang Y."/>
            <person name="Cheah K.S."/>
            <person name="Feng G."/>
            <person name="Guo X."/>
            <person name="Wang Y."/>
            <person name="Zhou C.Z."/>
            <person name="He L."/>
        </authorList>
    </citation>
    <scope>X-RAY CRYSTALLOGRAPHY (1.44 ANGSTROMS) OF 28-202 OF WILD TYPE AND VARIANTS BDA1 LYS-95; GLU-100 AND LYS-131 IN COMPLEX WITH ZINC IONS</scope>
    <scope>FUNCTION</scope>
    <scope>SUBUNIT</scope>
    <scope>INTERACTION WITH PTCH1</scope>
    <scope>SUBCELLULAR LOCATION</scope>
    <scope>CHOLESTERYLATION</scope>
    <scope>PALMITOYLATION</scope>
    <scope>MUTAGENESIS OF GLU-95</scope>
    <scope>DOMAIN</scope>
    <scope>CHARACTERIZATION OF VARIANTS BDA1 LYS-95; ASN-100; GLU-100 AND LYS-131</scope>
</reference>
<reference key="12">
    <citation type="journal article" date="2001" name="Nat. Genet.">
        <title>Mutations in IHH, encoding Indian hedgehog, cause brachydactyly type A-1.</title>
        <authorList>
            <person name="Gao B."/>
            <person name="Guo J."/>
            <person name="She C."/>
            <person name="Shu A."/>
            <person name="Yang M."/>
            <person name="Tan Z."/>
            <person name="Yang X."/>
            <person name="Guo S."/>
            <person name="Feng G."/>
            <person name="He L."/>
        </authorList>
    </citation>
    <scope>VARIANTS BDA1 LYS-95; GLU-100 AND LYS-131</scope>
</reference>
<reference key="13">
    <citation type="journal article" date="2002" name="Hum. Genet.">
        <title>A novel mutation in the IHH gene causes brachydactyly type A1: a 95-year-old mystery resolved.</title>
        <authorList>
            <person name="McCready M.E."/>
            <person name="Sweeney E."/>
            <person name="Fryer A.E."/>
            <person name="Donnai D."/>
            <person name="Baig A."/>
            <person name="Racacho L."/>
            <person name="Warman M.L."/>
            <person name="Hunter A.G.W."/>
            <person name="Bulman D.E."/>
        </authorList>
    </citation>
    <scope>VARIANT BDA1 ASN-100</scope>
</reference>
<reference key="14">
    <citation type="journal article" date="2003" name="Am. J. Hum. Genet.">
        <title>Homozygous mutations in IHH cause acrocapitofemoral dysplasia, an autosomal recessive disorder with cone-shaped epiphyses in hands and hips.</title>
        <authorList>
            <person name="Hellemans J."/>
            <person name="Coucke P.J."/>
            <person name="Giedion A."/>
            <person name="De Paepe A."/>
            <person name="Kramer P."/>
            <person name="Beemer F."/>
            <person name="Mortier G.R."/>
        </authorList>
    </citation>
    <scope>VARIANTS ACFD LEU-46 AND ALA-190</scope>
</reference>
<dbReference type="EC" id="3.1.-.-" evidence="4"/>
<dbReference type="EMBL" id="AB018076">
    <property type="protein sequence ID" value="BAA33523.2"/>
    <property type="molecule type" value="Genomic_DNA"/>
</dbReference>
<dbReference type="EMBL" id="CH471063">
    <property type="protein sequence ID" value="EAW70675.1"/>
    <property type="molecule type" value="Genomic_DNA"/>
</dbReference>
<dbReference type="EMBL" id="BC034757">
    <property type="protein sequence ID" value="AAH34757.2"/>
    <property type="molecule type" value="mRNA"/>
</dbReference>
<dbReference type="EMBL" id="BC136587">
    <property type="protein sequence ID" value="AAI36588.1"/>
    <property type="molecule type" value="mRNA"/>
</dbReference>
<dbReference type="EMBL" id="BC136588">
    <property type="protein sequence ID" value="AAI36589.1"/>
    <property type="molecule type" value="mRNA"/>
</dbReference>
<dbReference type="EMBL" id="L38517">
    <property type="protein sequence ID" value="AAA62178.1"/>
    <property type="molecule type" value="mRNA"/>
</dbReference>
<dbReference type="CCDS" id="CCDS33380.1"/>
<dbReference type="RefSeq" id="NP_002172.2">
    <property type="nucleotide sequence ID" value="NM_002181.4"/>
</dbReference>
<dbReference type="PDB" id="3K7G">
    <property type="method" value="X-ray"/>
    <property type="resolution" value="1.50 A"/>
    <property type="chains" value="B=28-202"/>
</dbReference>
<dbReference type="PDB" id="3K7H">
    <property type="method" value="X-ray"/>
    <property type="resolution" value="1.50 A"/>
    <property type="chains" value="B=28-202"/>
</dbReference>
<dbReference type="PDB" id="3K7I">
    <property type="method" value="X-ray"/>
    <property type="resolution" value="1.44 A"/>
    <property type="chains" value="B=28-202"/>
</dbReference>
<dbReference type="PDB" id="3K7J">
    <property type="method" value="X-ray"/>
    <property type="resolution" value="1.90 A"/>
    <property type="chains" value="B=28-202"/>
</dbReference>
<dbReference type="PDB" id="3N1F">
    <property type="method" value="X-ray"/>
    <property type="resolution" value="1.60 A"/>
    <property type="chains" value="A/B=29-193"/>
</dbReference>
<dbReference type="PDB" id="3N1M">
    <property type="method" value="X-ray"/>
    <property type="resolution" value="1.69 A"/>
    <property type="chains" value="B=29-193"/>
</dbReference>
<dbReference type="PDB" id="3N1O">
    <property type="method" value="X-ray"/>
    <property type="resolution" value="2.55 A"/>
    <property type="chains" value="A/B/C=29-193"/>
</dbReference>
<dbReference type="PDB" id="3N1P">
    <property type="method" value="X-ray"/>
    <property type="resolution" value="2.70 A"/>
    <property type="chains" value="B=29-193"/>
</dbReference>
<dbReference type="PDBsum" id="3K7G"/>
<dbReference type="PDBsum" id="3K7H"/>
<dbReference type="PDBsum" id="3K7I"/>
<dbReference type="PDBsum" id="3K7J"/>
<dbReference type="PDBsum" id="3N1F"/>
<dbReference type="PDBsum" id="3N1M"/>
<dbReference type="PDBsum" id="3N1O"/>
<dbReference type="PDBsum" id="3N1P"/>
<dbReference type="SMR" id="Q14623"/>
<dbReference type="BioGRID" id="109765">
    <property type="interactions" value="10"/>
</dbReference>
<dbReference type="FunCoup" id="Q14623">
    <property type="interactions" value="161"/>
</dbReference>
<dbReference type="IntAct" id="Q14623">
    <property type="interactions" value="4"/>
</dbReference>
<dbReference type="STRING" id="9606.ENSP00000295731"/>
<dbReference type="MEROPS" id="C46.003"/>
<dbReference type="GlyCosmos" id="Q14623">
    <property type="glycosylation" value="1 site, No reported glycans"/>
</dbReference>
<dbReference type="GlyGen" id="Q14623">
    <property type="glycosylation" value="1 site"/>
</dbReference>
<dbReference type="iPTMnet" id="Q14623"/>
<dbReference type="PhosphoSitePlus" id="Q14623"/>
<dbReference type="BioMuta" id="IHH"/>
<dbReference type="DMDM" id="33112634"/>
<dbReference type="jPOST" id="Q14623"/>
<dbReference type="MassIVE" id="Q14623"/>
<dbReference type="PaxDb" id="9606-ENSP00000295731"/>
<dbReference type="PeptideAtlas" id="Q14623"/>
<dbReference type="ProteomicsDB" id="60073"/>
<dbReference type="Antibodypedia" id="3977">
    <property type="antibodies" value="519 antibodies from 38 providers"/>
</dbReference>
<dbReference type="DNASU" id="3549"/>
<dbReference type="Ensembl" id="ENST00000295731.7">
    <property type="protein sequence ID" value="ENSP00000295731.5"/>
    <property type="gene ID" value="ENSG00000163501.7"/>
</dbReference>
<dbReference type="GeneID" id="3549"/>
<dbReference type="KEGG" id="hsa:3549"/>
<dbReference type="MANE-Select" id="ENST00000295731.7">
    <property type="protein sequence ID" value="ENSP00000295731.5"/>
    <property type="RefSeq nucleotide sequence ID" value="NM_002181.4"/>
    <property type="RefSeq protein sequence ID" value="NP_002172.2"/>
</dbReference>
<dbReference type="UCSC" id="uc002vjo.3">
    <property type="organism name" value="human"/>
</dbReference>
<dbReference type="AGR" id="HGNC:5956"/>
<dbReference type="CTD" id="3549"/>
<dbReference type="DisGeNET" id="3549"/>
<dbReference type="GeneCards" id="IHH"/>
<dbReference type="HGNC" id="HGNC:5956">
    <property type="gene designation" value="IHH"/>
</dbReference>
<dbReference type="HPA" id="ENSG00000163501">
    <property type="expression patterns" value="Tissue enhanced (endometrium, intestine, stomach)"/>
</dbReference>
<dbReference type="MalaCards" id="IHH"/>
<dbReference type="MIM" id="112500">
    <property type="type" value="phenotype"/>
</dbReference>
<dbReference type="MIM" id="600726">
    <property type="type" value="gene"/>
</dbReference>
<dbReference type="MIM" id="607778">
    <property type="type" value="phenotype"/>
</dbReference>
<dbReference type="neXtProt" id="NX_Q14623"/>
<dbReference type="OpenTargets" id="ENSG00000163501"/>
<dbReference type="Orphanet" id="63446">
    <property type="disease" value="Acrocapitofemoral dysplasia"/>
</dbReference>
<dbReference type="Orphanet" id="93388">
    <property type="disease" value="Brachydactyly type A1"/>
</dbReference>
<dbReference type="PharmGKB" id="PA29769"/>
<dbReference type="VEuPathDB" id="HostDB:ENSG00000163501"/>
<dbReference type="eggNOG" id="KOG3638">
    <property type="taxonomic scope" value="Eukaryota"/>
</dbReference>
<dbReference type="GeneTree" id="ENSGT00940000159207"/>
<dbReference type="HOGENOM" id="CLU_034686_0_0_1"/>
<dbReference type="InParanoid" id="Q14623"/>
<dbReference type="OMA" id="APAVRGC"/>
<dbReference type="OrthoDB" id="5212at2759"/>
<dbReference type="PAN-GO" id="Q14623">
    <property type="GO annotations" value="6 GO annotations based on evolutionary models"/>
</dbReference>
<dbReference type="PhylomeDB" id="Q14623"/>
<dbReference type="TreeFam" id="TF106458"/>
<dbReference type="PathwayCommons" id="Q14623"/>
<dbReference type="Reactome" id="R-HSA-373080">
    <property type="pathway name" value="Class B/2 (Secretin family receptors)"/>
</dbReference>
<dbReference type="Reactome" id="R-HSA-5358346">
    <property type="pathway name" value="Hedgehog ligand biogenesis"/>
</dbReference>
<dbReference type="Reactome" id="R-HSA-5362798">
    <property type="pathway name" value="Release of Hh-Np from the secreting cell"/>
</dbReference>
<dbReference type="Reactome" id="R-HSA-5632681">
    <property type="pathway name" value="Ligand-receptor interactions"/>
</dbReference>
<dbReference type="Reactome" id="R-HSA-5632684">
    <property type="pathway name" value="Hedgehog 'on' state"/>
</dbReference>
<dbReference type="Reactome" id="R-HSA-5635838">
    <property type="pathway name" value="Activation of SMO"/>
</dbReference>
<dbReference type="Reactome" id="R-HSA-5658034">
    <property type="pathway name" value="HHAT G278V doesn't palmitoylate Hh-Np"/>
</dbReference>
<dbReference type="Reactome" id="R-HSA-8941284">
    <property type="pathway name" value="RUNX2 regulates chondrocyte maturation"/>
</dbReference>
<dbReference type="Reactome" id="R-HSA-9758920">
    <property type="pathway name" value="Formation of lateral plate mesoderm"/>
</dbReference>
<dbReference type="SignaLink" id="Q14623"/>
<dbReference type="SIGNOR" id="Q14623"/>
<dbReference type="BioGRID-ORCS" id="3549">
    <property type="hits" value="7 hits in 1144 CRISPR screens"/>
</dbReference>
<dbReference type="EvolutionaryTrace" id="Q14623"/>
<dbReference type="GeneWiki" id="IHH_(protein)"/>
<dbReference type="GenomeRNAi" id="3549"/>
<dbReference type="Pharos" id="Q14623">
    <property type="development level" value="Tbio"/>
</dbReference>
<dbReference type="PRO" id="PR:Q14623"/>
<dbReference type="Proteomes" id="UP000005640">
    <property type="component" value="Chromosome 2"/>
</dbReference>
<dbReference type="RNAct" id="Q14623">
    <property type="molecule type" value="protein"/>
</dbReference>
<dbReference type="Bgee" id="ENSG00000163501">
    <property type="expression patterns" value="Expressed in mucosa of transverse colon and 72 other cell types or tissues"/>
</dbReference>
<dbReference type="GO" id="GO:0005789">
    <property type="term" value="C:endoplasmic reticulum membrane"/>
    <property type="evidence" value="ECO:0007669"/>
    <property type="project" value="UniProtKB-SubCell"/>
</dbReference>
<dbReference type="GO" id="GO:0031012">
    <property type="term" value="C:extracellular matrix"/>
    <property type="evidence" value="ECO:0007669"/>
    <property type="project" value="Ensembl"/>
</dbReference>
<dbReference type="GO" id="GO:0005615">
    <property type="term" value="C:extracellular space"/>
    <property type="evidence" value="ECO:0000318"/>
    <property type="project" value="GO_Central"/>
</dbReference>
<dbReference type="GO" id="GO:0000139">
    <property type="term" value="C:Golgi membrane"/>
    <property type="evidence" value="ECO:0007669"/>
    <property type="project" value="UniProtKB-SubCell"/>
</dbReference>
<dbReference type="GO" id="GO:0005886">
    <property type="term" value="C:plasma membrane"/>
    <property type="evidence" value="ECO:0000314"/>
    <property type="project" value="UniProtKB"/>
</dbReference>
<dbReference type="GO" id="GO:0005509">
    <property type="term" value="F:calcium ion binding"/>
    <property type="evidence" value="ECO:0000314"/>
    <property type="project" value="UniProtKB"/>
</dbReference>
<dbReference type="GO" id="GO:0140853">
    <property type="term" value="F:cholesterol-protein transferase activity"/>
    <property type="evidence" value="ECO:0000250"/>
    <property type="project" value="UniProtKB"/>
</dbReference>
<dbReference type="GO" id="GO:0005113">
    <property type="term" value="F:patched binding"/>
    <property type="evidence" value="ECO:0000314"/>
    <property type="project" value="UniProtKB"/>
</dbReference>
<dbReference type="GO" id="GO:0008233">
    <property type="term" value="F:peptidase activity"/>
    <property type="evidence" value="ECO:0000250"/>
    <property type="project" value="UniProtKB"/>
</dbReference>
<dbReference type="GO" id="GO:0045453">
    <property type="term" value="P:bone resorption"/>
    <property type="evidence" value="ECO:0007669"/>
    <property type="project" value="Ensembl"/>
</dbReference>
<dbReference type="GO" id="GO:0001569">
    <property type="term" value="P:branching involved in blood vessel morphogenesis"/>
    <property type="evidence" value="ECO:0007669"/>
    <property type="project" value="Ensembl"/>
</dbReference>
<dbReference type="GO" id="GO:0060220">
    <property type="term" value="P:camera-type eye photoreceptor cell fate commitment"/>
    <property type="evidence" value="ECO:0007669"/>
    <property type="project" value="Ensembl"/>
</dbReference>
<dbReference type="GO" id="GO:0001708">
    <property type="term" value="P:cell fate specification"/>
    <property type="evidence" value="ECO:0000318"/>
    <property type="project" value="GO_Central"/>
</dbReference>
<dbReference type="GO" id="GO:0048469">
    <property type="term" value="P:cell maturation"/>
    <property type="evidence" value="ECO:0007669"/>
    <property type="project" value="Ensembl"/>
</dbReference>
<dbReference type="GO" id="GO:0007267">
    <property type="term" value="P:cell-cell signaling"/>
    <property type="evidence" value="ECO:0007669"/>
    <property type="project" value="InterPro"/>
</dbReference>
<dbReference type="GO" id="GO:0003413">
    <property type="term" value="P:chondrocyte differentiation involved in endochondral bone morphogenesis"/>
    <property type="evidence" value="ECO:0007669"/>
    <property type="project" value="Ensembl"/>
</dbReference>
<dbReference type="GO" id="GO:0035988">
    <property type="term" value="P:chondrocyte proliferation"/>
    <property type="evidence" value="ECO:0007669"/>
    <property type="project" value="Ensembl"/>
</dbReference>
<dbReference type="GO" id="GO:0048596">
    <property type="term" value="P:embryonic camera-type eye morphogenesis"/>
    <property type="evidence" value="ECO:0007669"/>
    <property type="project" value="Ensembl"/>
</dbReference>
<dbReference type="GO" id="GO:0048557">
    <property type="term" value="P:embryonic digestive tract morphogenesis"/>
    <property type="evidence" value="ECO:0007669"/>
    <property type="project" value="Ensembl"/>
</dbReference>
<dbReference type="GO" id="GO:0042733">
    <property type="term" value="P:embryonic digit morphogenesis"/>
    <property type="evidence" value="ECO:0007669"/>
    <property type="project" value="Ensembl"/>
</dbReference>
<dbReference type="GO" id="GO:0009880">
    <property type="term" value="P:embryonic pattern specification"/>
    <property type="evidence" value="ECO:0007669"/>
    <property type="project" value="Ensembl"/>
</dbReference>
<dbReference type="GO" id="GO:0072498">
    <property type="term" value="P:embryonic skeletal joint development"/>
    <property type="evidence" value="ECO:0007669"/>
    <property type="project" value="Ensembl"/>
</dbReference>
<dbReference type="GO" id="GO:0003382">
    <property type="term" value="P:epithelial cell morphogenesis"/>
    <property type="evidence" value="ECO:0007669"/>
    <property type="project" value="Ensembl"/>
</dbReference>
<dbReference type="GO" id="GO:0090136">
    <property type="term" value="P:epithelial cell-cell adhesion"/>
    <property type="evidence" value="ECO:0007669"/>
    <property type="project" value="Ensembl"/>
</dbReference>
<dbReference type="GO" id="GO:0060323">
    <property type="term" value="P:head morphogenesis"/>
    <property type="evidence" value="ECO:0007669"/>
    <property type="project" value="Ensembl"/>
</dbReference>
<dbReference type="GO" id="GO:0001947">
    <property type="term" value="P:heart looping"/>
    <property type="evidence" value="ECO:0000250"/>
    <property type="project" value="BHF-UCL"/>
</dbReference>
<dbReference type="GO" id="GO:0001701">
    <property type="term" value="P:in utero embryonic development"/>
    <property type="evidence" value="ECO:0007669"/>
    <property type="project" value="Ensembl"/>
</dbReference>
<dbReference type="GO" id="GO:0016539">
    <property type="term" value="P:intein-mediated protein splicing"/>
    <property type="evidence" value="ECO:0007669"/>
    <property type="project" value="InterPro"/>
</dbReference>
<dbReference type="GO" id="GO:0097421">
    <property type="term" value="P:liver regeneration"/>
    <property type="evidence" value="ECO:0007669"/>
    <property type="project" value="Ensembl"/>
</dbReference>
<dbReference type="GO" id="GO:0060135">
    <property type="term" value="P:maternal process involved in female pregnancy"/>
    <property type="evidence" value="ECO:0007669"/>
    <property type="project" value="Ensembl"/>
</dbReference>
<dbReference type="GO" id="GO:0035264">
    <property type="term" value="P:multicellular organism growth"/>
    <property type="evidence" value="ECO:0007669"/>
    <property type="project" value="Ensembl"/>
</dbReference>
<dbReference type="GO" id="GO:0046639">
    <property type="term" value="P:negative regulation of alpha-beta T cell differentiation"/>
    <property type="evidence" value="ECO:0000250"/>
    <property type="project" value="BHF-UCL"/>
</dbReference>
<dbReference type="GO" id="GO:0043066">
    <property type="term" value="P:negative regulation of apoptotic process"/>
    <property type="evidence" value="ECO:0007669"/>
    <property type="project" value="Ensembl"/>
</dbReference>
<dbReference type="GO" id="GO:0032331">
    <property type="term" value="P:negative regulation of chondrocyte differentiation"/>
    <property type="evidence" value="ECO:0007669"/>
    <property type="project" value="Ensembl"/>
</dbReference>
<dbReference type="GO" id="GO:0048074">
    <property type="term" value="P:negative regulation of eye pigmentation"/>
    <property type="evidence" value="ECO:0007669"/>
    <property type="project" value="Ensembl"/>
</dbReference>
<dbReference type="GO" id="GO:0033088">
    <property type="term" value="P:negative regulation of immature T cell proliferation in thymus"/>
    <property type="evidence" value="ECO:0000250"/>
    <property type="project" value="BHF-UCL"/>
</dbReference>
<dbReference type="GO" id="GO:0033085">
    <property type="term" value="P:negative regulation of T cell differentiation in thymus"/>
    <property type="evidence" value="ECO:0000250"/>
    <property type="project" value="BHF-UCL"/>
</dbReference>
<dbReference type="GO" id="GO:0048666">
    <property type="term" value="P:neuron development"/>
    <property type="evidence" value="ECO:0007669"/>
    <property type="project" value="Ensembl"/>
</dbReference>
<dbReference type="GO" id="GO:0001649">
    <property type="term" value="P:osteoblast differentiation"/>
    <property type="evidence" value="ECO:0007669"/>
    <property type="project" value="Ensembl"/>
</dbReference>
<dbReference type="GO" id="GO:0031016">
    <property type="term" value="P:pancreas development"/>
    <property type="evidence" value="ECO:0007669"/>
    <property type="project" value="Ensembl"/>
</dbReference>
<dbReference type="GO" id="GO:0046638">
    <property type="term" value="P:positive regulation of alpha-beta T cell differentiation"/>
    <property type="evidence" value="ECO:0000250"/>
    <property type="project" value="BHF-UCL"/>
</dbReference>
<dbReference type="GO" id="GO:0032967">
    <property type="term" value="P:positive regulation of collagen biosynthetic process"/>
    <property type="evidence" value="ECO:0007669"/>
    <property type="project" value="Ensembl"/>
</dbReference>
<dbReference type="GO" id="GO:0050679">
    <property type="term" value="P:positive regulation of epithelial cell proliferation"/>
    <property type="evidence" value="ECO:0007669"/>
    <property type="project" value="Ensembl"/>
</dbReference>
<dbReference type="GO" id="GO:0002053">
    <property type="term" value="P:positive regulation of mesenchymal cell proliferation"/>
    <property type="evidence" value="ECO:0007669"/>
    <property type="project" value="Ensembl"/>
</dbReference>
<dbReference type="GO" id="GO:0045880">
    <property type="term" value="P:positive regulation of smoothened signaling pathway"/>
    <property type="evidence" value="ECO:0000314"/>
    <property type="project" value="UniProtKB"/>
</dbReference>
<dbReference type="GO" id="GO:0033089">
    <property type="term" value="P:positive regulation of T cell differentiation in thymus"/>
    <property type="evidence" value="ECO:0000250"/>
    <property type="project" value="BHF-UCL"/>
</dbReference>
<dbReference type="GO" id="GO:0045944">
    <property type="term" value="P:positive regulation of transcription by RNA polymerase II"/>
    <property type="evidence" value="ECO:0000250"/>
    <property type="project" value="BHF-UCL"/>
</dbReference>
<dbReference type="GO" id="GO:0016540">
    <property type="term" value="P:protein autoprocessing"/>
    <property type="evidence" value="ECO:0007669"/>
    <property type="project" value="InterPro"/>
</dbReference>
<dbReference type="GO" id="GO:0006029">
    <property type="term" value="P:proteoglycan metabolic process"/>
    <property type="evidence" value="ECO:0007669"/>
    <property type="project" value="Ensembl"/>
</dbReference>
<dbReference type="GO" id="GO:0010468">
    <property type="term" value="P:regulation of gene expression"/>
    <property type="evidence" value="ECO:0000318"/>
    <property type="project" value="GO_Central"/>
</dbReference>
<dbReference type="GO" id="GO:0040008">
    <property type="term" value="P:regulation of growth"/>
    <property type="evidence" value="ECO:0007669"/>
    <property type="project" value="Ensembl"/>
</dbReference>
<dbReference type="GO" id="GO:0032355">
    <property type="term" value="P:response to estradiol"/>
    <property type="evidence" value="ECO:0007669"/>
    <property type="project" value="Ensembl"/>
</dbReference>
<dbReference type="GO" id="GO:0009612">
    <property type="term" value="P:response to mechanical stimulus"/>
    <property type="evidence" value="ECO:0007669"/>
    <property type="project" value="Ensembl"/>
</dbReference>
<dbReference type="GO" id="GO:0003406">
    <property type="term" value="P:retinal pigment epithelium development"/>
    <property type="evidence" value="ECO:0007669"/>
    <property type="project" value="Ensembl"/>
</dbReference>
<dbReference type="GO" id="GO:0097264">
    <property type="term" value="P:self proteolysis"/>
    <property type="evidence" value="ECO:0000250"/>
    <property type="project" value="UniProtKB"/>
</dbReference>
<dbReference type="GO" id="GO:0001501">
    <property type="term" value="P:skeletal system development"/>
    <property type="evidence" value="ECO:0000315"/>
    <property type="project" value="UniProtKB"/>
</dbReference>
<dbReference type="GO" id="GO:0048745">
    <property type="term" value="P:smooth muscle tissue development"/>
    <property type="evidence" value="ECO:0007669"/>
    <property type="project" value="Ensembl"/>
</dbReference>
<dbReference type="GO" id="GO:0007224">
    <property type="term" value="P:smoothened signaling pathway"/>
    <property type="evidence" value="ECO:0000314"/>
    <property type="project" value="UniProtKB"/>
</dbReference>
<dbReference type="GO" id="GO:0061053">
    <property type="term" value="P:somite development"/>
    <property type="evidence" value="ECO:0000250"/>
    <property type="project" value="BHF-UCL"/>
</dbReference>
<dbReference type="GO" id="GO:0030704">
    <property type="term" value="P:vitelline membrane formation"/>
    <property type="evidence" value="ECO:0007669"/>
    <property type="project" value="Ensembl"/>
</dbReference>
<dbReference type="CDD" id="cd00081">
    <property type="entry name" value="Hint"/>
    <property type="match status" value="1"/>
</dbReference>
<dbReference type="FunFam" id="2.170.16.10:FF:000001">
    <property type="entry name" value="Indian hedgehog"/>
    <property type="match status" value="1"/>
</dbReference>
<dbReference type="FunFam" id="3.30.1380.10:FF:000001">
    <property type="entry name" value="Indian hedgehog"/>
    <property type="match status" value="1"/>
</dbReference>
<dbReference type="Gene3D" id="3.30.1380.10">
    <property type="match status" value="1"/>
</dbReference>
<dbReference type="Gene3D" id="2.170.16.10">
    <property type="entry name" value="Hedgehog/Intein (Hint) domain"/>
    <property type="match status" value="1"/>
</dbReference>
<dbReference type="InterPro" id="IPR001657">
    <property type="entry name" value="Hedgehog"/>
</dbReference>
<dbReference type="InterPro" id="IPR001767">
    <property type="entry name" value="Hedgehog_Hint"/>
</dbReference>
<dbReference type="InterPro" id="IPR009045">
    <property type="entry name" value="Hedgehog_sig/DD-Pept_Zn-bd_sf"/>
</dbReference>
<dbReference type="InterPro" id="IPR050387">
    <property type="entry name" value="Hedgehog_Signaling"/>
</dbReference>
<dbReference type="InterPro" id="IPR000320">
    <property type="entry name" value="Hedgehog_signalling_dom"/>
</dbReference>
<dbReference type="InterPro" id="IPR003586">
    <property type="entry name" value="Hint_dom_C"/>
</dbReference>
<dbReference type="InterPro" id="IPR003587">
    <property type="entry name" value="Hint_dom_N"/>
</dbReference>
<dbReference type="InterPro" id="IPR036844">
    <property type="entry name" value="Hint_dom_sf"/>
</dbReference>
<dbReference type="InterPro" id="IPR006141">
    <property type="entry name" value="Intein_N"/>
</dbReference>
<dbReference type="PANTHER" id="PTHR11889">
    <property type="entry name" value="HEDGEHOG"/>
    <property type="match status" value="1"/>
</dbReference>
<dbReference type="PANTHER" id="PTHR11889:SF39">
    <property type="entry name" value="INDIAN HEDGEHOG PROTEIN"/>
    <property type="match status" value="1"/>
</dbReference>
<dbReference type="Pfam" id="PF01085">
    <property type="entry name" value="HH_signal"/>
    <property type="match status" value="1"/>
</dbReference>
<dbReference type="Pfam" id="PF01079">
    <property type="entry name" value="Hint"/>
    <property type="match status" value="1"/>
</dbReference>
<dbReference type="PIRSF" id="PIRSF009400">
    <property type="entry name" value="Peptidase_C46"/>
    <property type="match status" value="1"/>
</dbReference>
<dbReference type="PRINTS" id="PR00632">
    <property type="entry name" value="SONICHHOG"/>
</dbReference>
<dbReference type="SMART" id="SM00305">
    <property type="entry name" value="HintC"/>
    <property type="match status" value="1"/>
</dbReference>
<dbReference type="SMART" id="SM00306">
    <property type="entry name" value="HintN"/>
    <property type="match status" value="1"/>
</dbReference>
<dbReference type="SUPFAM" id="SSF55166">
    <property type="entry name" value="Hedgehog/DD-peptidase"/>
    <property type="match status" value="1"/>
</dbReference>
<dbReference type="SUPFAM" id="SSF51294">
    <property type="entry name" value="Hedgehog/intein (Hint) domain"/>
    <property type="match status" value="1"/>
</dbReference>
<dbReference type="PROSITE" id="PS50817">
    <property type="entry name" value="INTEIN_N_TER"/>
    <property type="match status" value="1"/>
</dbReference>
<protein>
    <recommendedName>
        <fullName evidence="14">Indian hedgehog protein</fullName>
        <shortName>IHH</shortName>
        <ecNumber evidence="4">3.1.-.-</ecNumber>
    </recommendedName>
    <alternativeName>
        <fullName>HHG-2</fullName>
    </alternativeName>
    <component>
        <recommendedName>
            <fullName>Indian hedgehog protein N-product</fullName>
        </recommendedName>
    </component>
</protein>
<gene>
    <name evidence="16" type="primary">IHH</name>
</gene>
<name>IHH_HUMAN</name>
<accession>Q14623</accession>
<accession>B9EGM5</accession>
<accession>O43322</accession>
<accession>Q8N4B9</accession>
<organism>
    <name type="scientific">Homo sapiens</name>
    <name type="common">Human</name>
    <dbReference type="NCBI Taxonomy" id="9606"/>
    <lineage>
        <taxon>Eukaryota</taxon>
        <taxon>Metazoa</taxon>
        <taxon>Chordata</taxon>
        <taxon>Craniata</taxon>
        <taxon>Vertebrata</taxon>
        <taxon>Euteleostomi</taxon>
        <taxon>Mammalia</taxon>
        <taxon>Eutheria</taxon>
        <taxon>Euarchontoglires</taxon>
        <taxon>Primates</taxon>
        <taxon>Haplorrhini</taxon>
        <taxon>Catarrhini</taxon>
        <taxon>Hominidae</taxon>
        <taxon>Homo</taxon>
    </lineage>
</organism>